<sequence length="291" mass="31893">MADLDDIKDGKDFRTDQPQKNIPFTLKGCGALDWGMQSRLSRIFNPKTGKTVMLAFDHGYFQGPTTGLERIDINIAPLFEHADVLMCTRGILRSVVPPATNRPVVLRASGANSILAELSNEAVALSMDDAVRLNSCAVAAQVYIGSEYEHQSIKNIIQLVDAGMKVGMPTMAVTGVGKDMVRDQRYFSLATRIAAEMGAQIIKTYYVEKGFERIVAGCPVPIVIAGGKKLPEREALEMCWQAIDQGASGVDMGRNIFQSDHPVAMMKAVQAVVHHNETADRAYELYLSEKQ</sequence>
<organism>
    <name type="scientific">Escherichia coli (strain K12 / DH10B)</name>
    <dbReference type="NCBI Taxonomy" id="316385"/>
    <lineage>
        <taxon>Bacteria</taxon>
        <taxon>Pseudomonadati</taxon>
        <taxon>Pseudomonadota</taxon>
        <taxon>Gammaproteobacteria</taxon>
        <taxon>Enterobacterales</taxon>
        <taxon>Enterobacteriaceae</taxon>
        <taxon>Escherichia</taxon>
    </lineage>
</organism>
<name>LSRF_ECODH</name>
<evidence type="ECO:0000255" key="1">
    <source>
        <dbReference type="HAMAP-Rule" id="MF_02052"/>
    </source>
</evidence>
<dbReference type="EC" id="2.3.1.245" evidence="1"/>
<dbReference type="EMBL" id="CP000948">
    <property type="protein sequence ID" value="ACB02727.1"/>
    <property type="molecule type" value="Genomic_DNA"/>
</dbReference>
<dbReference type="RefSeq" id="WP_000774165.1">
    <property type="nucleotide sequence ID" value="NC_010473.1"/>
</dbReference>
<dbReference type="SMR" id="B1XEA5"/>
<dbReference type="KEGG" id="ecd:ECDH10B_1648"/>
<dbReference type="HOGENOM" id="CLU_057069_1_0_6"/>
<dbReference type="GO" id="GO:0005737">
    <property type="term" value="C:cytoplasm"/>
    <property type="evidence" value="ECO:0007669"/>
    <property type="project" value="UniProtKB-SubCell"/>
</dbReference>
<dbReference type="GO" id="GO:0016747">
    <property type="term" value="F:acyltransferase activity, transferring groups other than amino-acyl groups"/>
    <property type="evidence" value="ECO:0007669"/>
    <property type="project" value="UniProtKB-UniRule"/>
</dbReference>
<dbReference type="GO" id="GO:0004332">
    <property type="term" value="F:fructose-bisphosphate aldolase activity"/>
    <property type="evidence" value="ECO:0007669"/>
    <property type="project" value="InterPro"/>
</dbReference>
<dbReference type="CDD" id="cd00958">
    <property type="entry name" value="DhnA"/>
    <property type="match status" value="1"/>
</dbReference>
<dbReference type="FunFam" id="3.20.20.70:FF:000168">
    <property type="entry name" value="3-hydroxy-5-phosphonooxypentane-2,4-dione thiolase"/>
    <property type="match status" value="1"/>
</dbReference>
<dbReference type="Gene3D" id="3.20.20.70">
    <property type="entry name" value="Aldolase class I"/>
    <property type="match status" value="1"/>
</dbReference>
<dbReference type="HAMAP" id="MF_02052">
    <property type="entry name" value="LsrF"/>
    <property type="match status" value="1"/>
</dbReference>
<dbReference type="InterPro" id="IPR013785">
    <property type="entry name" value="Aldolase_TIM"/>
</dbReference>
<dbReference type="InterPro" id="IPR002915">
    <property type="entry name" value="DeoC/FbaB/LacD_aldolase"/>
</dbReference>
<dbReference type="InterPro" id="IPR050456">
    <property type="entry name" value="DeoC/FbaB_aldolase"/>
</dbReference>
<dbReference type="InterPro" id="IPR041720">
    <property type="entry name" value="FbaB-like"/>
</dbReference>
<dbReference type="InterPro" id="IPR033673">
    <property type="entry name" value="LsrF"/>
</dbReference>
<dbReference type="NCBIfam" id="NF006081">
    <property type="entry name" value="PRK08227.1"/>
    <property type="match status" value="1"/>
</dbReference>
<dbReference type="PANTHER" id="PTHR47916:SF1">
    <property type="entry name" value="3-HYDROXY-5-PHOSPHONOOXYPENTANE-2,4-DIONE THIOLASE"/>
    <property type="match status" value="1"/>
</dbReference>
<dbReference type="PANTHER" id="PTHR47916">
    <property type="entry name" value="FRUCTOSE-BISPHOSPHATE ALDOLASE CLASS 1"/>
    <property type="match status" value="1"/>
</dbReference>
<dbReference type="Pfam" id="PF01791">
    <property type="entry name" value="DeoC"/>
    <property type="match status" value="1"/>
</dbReference>
<dbReference type="PIRSF" id="PIRSF038992">
    <property type="entry name" value="Aldolase_Ia"/>
    <property type="match status" value="1"/>
</dbReference>
<dbReference type="SMART" id="SM01133">
    <property type="entry name" value="DeoC"/>
    <property type="match status" value="1"/>
</dbReference>
<dbReference type="SUPFAM" id="SSF51569">
    <property type="entry name" value="Aldolase"/>
    <property type="match status" value="1"/>
</dbReference>
<accession>B1XEA5</accession>
<reference key="1">
    <citation type="journal article" date="2008" name="J. Bacteriol.">
        <title>The complete genome sequence of Escherichia coli DH10B: insights into the biology of a laboratory workhorse.</title>
        <authorList>
            <person name="Durfee T."/>
            <person name="Nelson R."/>
            <person name="Baldwin S."/>
            <person name="Plunkett G. III"/>
            <person name="Burland V."/>
            <person name="Mau B."/>
            <person name="Petrosino J.F."/>
            <person name="Qin X."/>
            <person name="Muzny D.M."/>
            <person name="Ayele M."/>
            <person name="Gibbs R.A."/>
            <person name="Csorgo B."/>
            <person name="Posfai G."/>
            <person name="Weinstock G.M."/>
            <person name="Blattner F.R."/>
        </authorList>
    </citation>
    <scope>NUCLEOTIDE SEQUENCE [LARGE SCALE GENOMIC DNA]</scope>
    <source>
        <strain>K12 / DH10B</strain>
    </source>
</reference>
<comment type="function">
    <text evidence="1">Involved in the degradation of phospho-AI-2, thereby terminating induction of the lsr operon and closing the AI-2 signaling cycle. Catalyzes the transfer of an acetyl moiety from 3-hydroxy-5-phosphonooxypentane-2,4-dione to CoA to form glycerone phosphate and acetyl-CoA.</text>
</comment>
<comment type="catalytic activity">
    <reaction evidence="1">
        <text>dihydroxyacetone phosphate + acetyl-CoA = 3-hydroxy-2,4-dioxopentyl phosphate + CoA</text>
        <dbReference type="Rhea" id="RHEA:44736"/>
        <dbReference type="ChEBI" id="CHEBI:57287"/>
        <dbReference type="ChEBI" id="CHEBI:57288"/>
        <dbReference type="ChEBI" id="CHEBI:57642"/>
        <dbReference type="ChEBI" id="CHEBI:84359"/>
        <dbReference type="EC" id="2.3.1.245"/>
    </reaction>
</comment>
<comment type="subunit">
    <text evidence="1">Homodecamer.</text>
</comment>
<comment type="subcellular location">
    <subcellularLocation>
        <location evidence="1">Cytoplasm</location>
    </subcellularLocation>
</comment>
<comment type="similarity">
    <text evidence="1">Belongs to the DeoC/FbaB aldolase family.</text>
</comment>
<proteinExistence type="inferred from homology"/>
<protein>
    <recommendedName>
        <fullName evidence="1">3-hydroxy-5-phosphonooxypentane-2,4-dione thiolase</fullName>
        <ecNumber evidence="1">2.3.1.245</ecNumber>
    </recommendedName>
</protein>
<gene>
    <name evidence="1" type="primary">lsrF</name>
    <name type="ordered locus">ECDH10B_1648</name>
</gene>
<keyword id="KW-0963">Cytoplasm</keyword>
<keyword id="KW-0704">Schiff base</keyword>
<keyword id="KW-0808">Transferase</keyword>
<feature type="chain" id="PRO_0000351519" description="3-hydroxy-5-phosphonooxypentane-2,4-dione thiolase">
    <location>
        <begin position="1"/>
        <end position="291"/>
    </location>
</feature>
<feature type="active site" description="Schiff-base intermediate with substrate" evidence="1">
    <location>
        <position position="203"/>
    </location>
</feature>